<sequence>MARVTVQEAADKIGNRFDLILTAARRARQLQLHAREPLVPEENDKPTVIALREIEKGLINGQIMDQLENNDAIQQEVAEQEAISFLADVQG</sequence>
<dbReference type="EC" id="2.7.7.6" evidence="1"/>
<dbReference type="EMBL" id="CP000569">
    <property type="protein sequence ID" value="ABN74908.1"/>
    <property type="molecule type" value="Genomic_DNA"/>
</dbReference>
<dbReference type="RefSeq" id="WP_011848662.1">
    <property type="nucleotide sequence ID" value="NC_009053.1"/>
</dbReference>
<dbReference type="SMR" id="A3N3C2"/>
<dbReference type="STRING" id="416269.APL_1826"/>
<dbReference type="EnsemblBacteria" id="ABN74908">
    <property type="protein sequence ID" value="ABN74908"/>
    <property type="gene ID" value="APL_1826"/>
</dbReference>
<dbReference type="KEGG" id="apl:APL_1826"/>
<dbReference type="PATRIC" id="fig|416269.6.peg.1901"/>
<dbReference type="eggNOG" id="COG1758">
    <property type="taxonomic scope" value="Bacteria"/>
</dbReference>
<dbReference type="HOGENOM" id="CLU_125406_5_3_6"/>
<dbReference type="Proteomes" id="UP000001432">
    <property type="component" value="Chromosome"/>
</dbReference>
<dbReference type="GO" id="GO:0000428">
    <property type="term" value="C:DNA-directed RNA polymerase complex"/>
    <property type="evidence" value="ECO:0007669"/>
    <property type="project" value="UniProtKB-KW"/>
</dbReference>
<dbReference type="GO" id="GO:0003677">
    <property type="term" value="F:DNA binding"/>
    <property type="evidence" value="ECO:0007669"/>
    <property type="project" value="UniProtKB-UniRule"/>
</dbReference>
<dbReference type="GO" id="GO:0003899">
    <property type="term" value="F:DNA-directed RNA polymerase activity"/>
    <property type="evidence" value="ECO:0007669"/>
    <property type="project" value="UniProtKB-UniRule"/>
</dbReference>
<dbReference type="GO" id="GO:0006351">
    <property type="term" value="P:DNA-templated transcription"/>
    <property type="evidence" value="ECO:0007669"/>
    <property type="project" value="UniProtKB-UniRule"/>
</dbReference>
<dbReference type="Gene3D" id="3.90.940.10">
    <property type="match status" value="1"/>
</dbReference>
<dbReference type="HAMAP" id="MF_00366">
    <property type="entry name" value="RNApol_bact_RpoZ"/>
    <property type="match status" value="1"/>
</dbReference>
<dbReference type="InterPro" id="IPR003716">
    <property type="entry name" value="DNA-dir_RNA_pol_omega"/>
</dbReference>
<dbReference type="InterPro" id="IPR006110">
    <property type="entry name" value="Pol_omega/Rpo6/RPB6"/>
</dbReference>
<dbReference type="InterPro" id="IPR036161">
    <property type="entry name" value="RPB6/omega-like_sf"/>
</dbReference>
<dbReference type="NCBIfam" id="TIGR00690">
    <property type="entry name" value="rpoZ"/>
    <property type="match status" value="1"/>
</dbReference>
<dbReference type="PANTHER" id="PTHR34476">
    <property type="entry name" value="DNA-DIRECTED RNA POLYMERASE SUBUNIT OMEGA"/>
    <property type="match status" value="1"/>
</dbReference>
<dbReference type="PANTHER" id="PTHR34476:SF1">
    <property type="entry name" value="DNA-DIRECTED RNA POLYMERASE SUBUNIT OMEGA"/>
    <property type="match status" value="1"/>
</dbReference>
<dbReference type="Pfam" id="PF01192">
    <property type="entry name" value="RNA_pol_Rpb6"/>
    <property type="match status" value="1"/>
</dbReference>
<dbReference type="SMART" id="SM01409">
    <property type="entry name" value="RNA_pol_Rpb6"/>
    <property type="match status" value="1"/>
</dbReference>
<dbReference type="SUPFAM" id="SSF63562">
    <property type="entry name" value="RPB6/omega subunit-like"/>
    <property type="match status" value="1"/>
</dbReference>
<evidence type="ECO:0000255" key="1">
    <source>
        <dbReference type="HAMAP-Rule" id="MF_00366"/>
    </source>
</evidence>
<proteinExistence type="inferred from homology"/>
<feature type="chain" id="PRO_1000005880" description="DNA-directed RNA polymerase subunit omega">
    <location>
        <begin position="1"/>
        <end position="91"/>
    </location>
</feature>
<accession>A3N3C2</accession>
<organism>
    <name type="scientific">Actinobacillus pleuropneumoniae serotype 5b (strain L20)</name>
    <dbReference type="NCBI Taxonomy" id="416269"/>
    <lineage>
        <taxon>Bacteria</taxon>
        <taxon>Pseudomonadati</taxon>
        <taxon>Pseudomonadota</taxon>
        <taxon>Gammaproteobacteria</taxon>
        <taxon>Pasteurellales</taxon>
        <taxon>Pasteurellaceae</taxon>
        <taxon>Actinobacillus</taxon>
    </lineage>
</organism>
<comment type="function">
    <text evidence="1">Promotes RNA polymerase assembly. Latches the N- and C-terminal regions of the beta' subunit thereby facilitating its interaction with the beta and alpha subunits.</text>
</comment>
<comment type="catalytic activity">
    <reaction evidence="1">
        <text>RNA(n) + a ribonucleoside 5'-triphosphate = RNA(n+1) + diphosphate</text>
        <dbReference type="Rhea" id="RHEA:21248"/>
        <dbReference type="Rhea" id="RHEA-COMP:14527"/>
        <dbReference type="Rhea" id="RHEA-COMP:17342"/>
        <dbReference type="ChEBI" id="CHEBI:33019"/>
        <dbReference type="ChEBI" id="CHEBI:61557"/>
        <dbReference type="ChEBI" id="CHEBI:140395"/>
        <dbReference type="EC" id="2.7.7.6"/>
    </reaction>
</comment>
<comment type="subunit">
    <text evidence="1">The RNAP catalytic core consists of 2 alpha, 1 beta, 1 beta' and 1 omega subunit. When a sigma factor is associated with the core the holoenzyme is formed, which can initiate transcription.</text>
</comment>
<comment type="similarity">
    <text evidence="1">Belongs to the RNA polymerase subunit omega family.</text>
</comment>
<gene>
    <name evidence="1" type="primary">rpoZ</name>
    <name type="ordered locus">APL_1826</name>
</gene>
<reference key="1">
    <citation type="journal article" date="2008" name="J. Bacteriol.">
        <title>The complete genome sequence of Actinobacillus pleuropneumoniae L20 (serotype 5b).</title>
        <authorList>
            <person name="Foote S.J."/>
            <person name="Bosse J.T."/>
            <person name="Bouevitch A.B."/>
            <person name="Langford P.R."/>
            <person name="Young N.M."/>
            <person name="Nash J.H.E."/>
        </authorList>
    </citation>
    <scope>NUCLEOTIDE SEQUENCE [LARGE SCALE GENOMIC DNA]</scope>
    <source>
        <strain>L20</strain>
    </source>
</reference>
<name>RPOZ_ACTP2</name>
<protein>
    <recommendedName>
        <fullName evidence="1">DNA-directed RNA polymerase subunit omega</fullName>
        <shortName evidence="1">RNAP omega subunit</shortName>
        <ecNumber evidence="1">2.7.7.6</ecNumber>
    </recommendedName>
    <alternativeName>
        <fullName evidence="1">RNA polymerase omega subunit</fullName>
    </alternativeName>
    <alternativeName>
        <fullName evidence="1">Transcriptase subunit omega</fullName>
    </alternativeName>
</protein>
<keyword id="KW-0240">DNA-directed RNA polymerase</keyword>
<keyword id="KW-0548">Nucleotidyltransferase</keyword>
<keyword id="KW-1185">Reference proteome</keyword>
<keyword id="KW-0804">Transcription</keyword>
<keyword id="KW-0808">Transferase</keyword>